<gene>
    <name evidence="1" type="primary">lgt</name>
    <name type="ordered locus">lin2625</name>
</gene>
<comment type="function">
    <text evidence="1">Catalyzes the transfer of the diacylglyceryl group from phosphatidylglycerol to the sulfhydryl group of the N-terminal cysteine of a prolipoprotein, the first step in the formation of mature lipoproteins.</text>
</comment>
<comment type="catalytic activity">
    <reaction evidence="1">
        <text>L-cysteinyl-[prolipoprotein] + a 1,2-diacyl-sn-glycero-3-phospho-(1'-sn-glycerol) = an S-1,2-diacyl-sn-glyceryl-L-cysteinyl-[prolipoprotein] + sn-glycerol 1-phosphate + H(+)</text>
        <dbReference type="Rhea" id="RHEA:56712"/>
        <dbReference type="Rhea" id="RHEA-COMP:14679"/>
        <dbReference type="Rhea" id="RHEA-COMP:14680"/>
        <dbReference type="ChEBI" id="CHEBI:15378"/>
        <dbReference type="ChEBI" id="CHEBI:29950"/>
        <dbReference type="ChEBI" id="CHEBI:57685"/>
        <dbReference type="ChEBI" id="CHEBI:64716"/>
        <dbReference type="ChEBI" id="CHEBI:140658"/>
        <dbReference type="EC" id="2.5.1.145"/>
    </reaction>
</comment>
<comment type="pathway">
    <text evidence="1">Protein modification; lipoprotein biosynthesis (diacylglyceryl transfer).</text>
</comment>
<comment type="subcellular location">
    <subcellularLocation>
        <location evidence="1">Cell membrane</location>
        <topology evidence="1">Multi-pass membrane protein</topology>
    </subcellularLocation>
</comment>
<comment type="similarity">
    <text evidence="1">Belongs to the Lgt family.</text>
</comment>
<sequence length="277" mass="31535">MGNGVQPLDPVAIQIGSISVKWYGVIIASAVVIALLLALSEANKRKMDKEIIVDLLIWAIPISIISARIYYVIFEWDFYKNNLGEIVKIWHGGIAIYGALIGAVLTAVIFSRIKKISFWKLADVVAPSLIIAQAIGRWGNFMNQEAHGAETTRAFLEGLHLPEFIINQMYIDGAYYQPTFLYESLWNVLGFIVLLIIRRTKIRSGELFLSYVIWYSFGRFFIEGMRTDSLMWGDFRVSQVLSLLLIVLSIGLIIYRRVKMNPPYYMEDKLGKVAKKK</sequence>
<organism>
    <name type="scientific">Listeria innocua serovar 6a (strain ATCC BAA-680 / CLIP 11262)</name>
    <dbReference type="NCBI Taxonomy" id="272626"/>
    <lineage>
        <taxon>Bacteria</taxon>
        <taxon>Bacillati</taxon>
        <taxon>Bacillota</taxon>
        <taxon>Bacilli</taxon>
        <taxon>Bacillales</taxon>
        <taxon>Listeriaceae</taxon>
        <taxon>Listeria</taxon>
    </lineage>
</organism>
<feature type="chain" id="PRO_0000172626" description="Phosphatidylglycerol--prolipoprotein diacylglyceryl transferase">
    <location>
        <begin position="1"/>
        <end position="277"/>
    </location>
</feature>
<feature type="transmembrane region" description="Helical" evidence="1">
    <location>
        <begin position="18"/>
        <end position="38"/>
    </location>
</feature>
<feature type="transmembrane region" description="Helical" evidence="1">
    <location>
        <begin position="51"/>
        <end position="71"/>
    </location>
</feature>
<feature type="transmembrane region" description="Helical" evidence="1">
    <location>
        <begin position="89"/>
        <end position="109"/>
    </location>
</feature>
<feature type="transmembrane region" description="Helical" evidence="1">
    <location>
        <begin position="116"/>
        <end position="136"/>
    </location>
</feature>
<feature type="transmembrane region" description="Helical" evidence="1">
    <location>
        <begin position="177"/>
        <end position="197"/>
    </location>
</feature>
<feature type="transmembrane region" description="Helical" evidence="1">
    <location>
        <begin position="205"/>
        <end position="225"/>
    </location>
</feature>
<feature type="transmembrane region" description="Helical" evidence="1">
    <location>
        <begin position="235"/>
        <end position="255"/>
    </location>
</feature>
<feature type="binding site" evidence="1">
    <location>
        <position position="137"/>
    </location>
    <ligand>
        <name>a 1,2-diacyl-sn-glycero-3-phospho-(1'-sn-glycerol)</name>
        <dbReference type="ChEBI" id="CHEBI:64716"/>
    </ligand>
</feature>
<proteinExistence type="inferred from homology"/>
<name>LGT_LISIN</name>
<evidence type="ECO:0000255" key="1">
    <source>
        <dbReference type="HAMAP-Rule" id="MF_01147"/>
    </source>
</evidence>
<dbReference type="EC" id="2.5.1.145" evidence="1"/>
<dbReference type="EMBL" id="AL596173">
    <property type="protein sequence ID" value="CAC97852.1"/>
    <property type="molecule type" value="Genomic_DNA"/>
</dbReference>
<dbReference type="PIR" id="AD1760">
    <property type="entry name" value="AD1760"/>
</dbReference>
<dbReference type="RefSeq" id="WP_003772355.1">
    <property type="nucleotide sequence ID" value="NC_003212.1"/>
</dbReference>
<dbReference type="SMR" id="Q928B1"/>
<dbReference type="STRING" id="272626.gene:17567006"/>
<dbReference type="GeneID" id="93235889"/>
<dbReference type="KEGG" id="lin:lgt"/>
<dbReference type="eggNOG" id="COG0682">
    <property type="taxonomic scope" value="Bacteria"/>
</dbReference>
<dbReference type="HOGENOM" id="CLU_013386_1_2_9"/>
<dbReference type="OrthoDB" id="871140at2"/>
<dbReference type="UniPathway" id="UPA00664"/>
<dbReference type="Proteomes" id="UP000002513">
    <property type="component" value="Chromosome"/>
</dbReference>
<dbReference type="GO" id="GO:0005886">
    <property type="term" value="C:plasma membrane"/>
    <property type="evidence" value="ECO:0007669"/>
    <property type="project" value="UniProtKB-SubCell"/>
</dbReference>
<dbReference type="GO" id="GO:0008961">
    <property type="term" value="F:phosphatidylglycerol-prolipoprotein diacylglyceryl transferase activity"/>
    <property type="evidence" value="ECO:0007669"/>
    <property type="project" value="UniProtKB-UniRule"/>
</dbReference>
<dbReference type="GO" id="GO:0042158">
    <property type="term" value="P:lipoprotein biosynthetic process"/>
    <property type="evidence" value="ECO:0007669"/>
    <property type="project" value="UniProtKB-UniRule"/>
</dbReference>
<dbReference type="HAMAP" id="MF_01147">
    <property type="entry name" value="Lgt"/>
    <property type="match status" value="1"/>
</dbReference>
<dbReference type="InterPro" id="IPR001640">
    <property type="entry name" value="Lgt"/>
</dbReference>
<dbReference type="NCBIfam" id="TIGR00544">
    <property type="entry name" value="lgt"/>
    <property type="match status" value="1"/>
</dbReference>
<dbReference type="PANTHER" id="PTHR30589:SF0">
    <property type="entry name" value="PHOSPHATIDYLGLYCEROL--PROLIPOPROTEIN DIACYLGLYCERYL TRANSFERASE"/>
    <property type="match status" value="1"/>
</dbReference>
<dbReference type="PANTHER" id="PTHR30589">
    <property type="entry name" value="PROLIPOPROTEIN DIACYLGLYCERYL TRANSFERASE"/>
    <property type="match status" value="1"/>
</dbReference>
<dbReference type="Pfam" id="PF01790">
    <property type="entry name" value="LGT"/>
    <property type="match status" value="1"/>
</dbReference>
<dbReference type="PROSITE" id="PS01311">
    <property type="entry name" value="LGT"/>
    <property type="match status" value="1"/>
</dbReference>
<protein>
    <recommendedName>
        <fullName evidence="1">Phosphatidylglycerol--prolipoprotein diacylglyceryl transferase</fullName>
        <ecNumber evidence="1">2.5.1.145</ecNumber>
    </recommendedName>
</protein>
<accession>Q928B1</accession>
<keyword id="KW-1003">Cell membrane</keyword>
<keyword id="KW-0472">Membrane</keyword>
<keyword id="KW-0808">Transferase</keyword>
<keyword id="KW-0812">Transmembrane</keyword>
<keyword id="KW-1133">Transmembrane helix</keyword>
<reference key="1">
    <citation type="journal article" date="2001" name="Science">
        <title>Comparative genomics of Listeria species.</title>
        <authorList>
            <person name="Glaser P."/>
            <person name="Frangeul L."/>
            <person name="Buchrieser C."/>
            <person name="Rusniok C."/>
            <person name="Amend A."/>
            <person name="Baquero F."/>
            <person name="Berche P."/>
            <person name="Bloecker H."/>
            <person name="Brandt P."/>
            <person name="Chakraborty T."/>
            <person name="Charbit A."/>
            <person name="Chetouani F."/>
            <person name="Couve E."/>
            <person name="de Daruvar A."/>
            <person name="Dehoux P."/>
            <person name="Domann E."/>
            <person name="Dominguez-Bernal G."/>
            <person name="Duchaud E."/>
            <person name="Durant L."/>
            <person name="Dussurget O."/>
            <person name="Entian K.-D."/>
            <person name="Fsihi H."/>
            <person name="Garcia-del Portillo F."/>
            <person name="Garrido P."/>
            <person name="Gautier L."/>
            <person name="Goebel W."/>
            <person name="Gomez-Lopez N."/>
            <person name="Hain T."/>
            <person name="Hauf J."/>
            <person name="Jackson D."/>
            <person name="Jones L.-M."/>
            <person name="Kaerst U."/>
            <person name="Kreft J."/>
            <person name="Kuhn M."/>
            <person name="Kunst F."/>
            <person name="Kurapkat G."/>
            <person name="Madueno E."/>
            <person name="Maitournam A."/>
            <person name="Mata Vicente J."/>
            <person name="Ng E."/>
            <person name="Nedjari H."/>
            <person name="Nordsiek G."/>
            <person name="Novella S."/>
            <person name="de Pablos B."/>
            <person name="Perez-Diaz J.-C."/>
            <person name="Purcell R."/>
            <person name="Remmel B."/>
            <person name="Rose M."/>
            <person name="Schlueter T."/>
            <person name="Simoes N."/>
            <person name="Tierrez A."/>
            <person name="Vazquez-Boland J.-A."/>
            <person name="Voss H."/>
            <person name="Wehland J."/>
            <person name="Cossart P."/>
        </authorList>
    </citation>
    <scope>NUCLEOTIDE SEQUENCE [LARGE SCALE GENOMIC DNA]</scope>
    <source>
        <strain>ATCC BAA-680 / CLIP 11262</strain>
    </source>
</reference>